<comment type="catalytic activity">
    <reaction evidence="3">
        <text>O-phospho-L-tyrosyl-[protein] + H2O = L-tyrosyl-[protein] + phosphate</text>
        <dbReference type="Rhea" id="RHEA:10684"/>
        <dbReference type="Rhea" id="RHEA-COMP:10136"/>
        <dbReference type="Rhea" id="RHEA-COMP:20101"/>
        <dbReference type="ChEBI" id="CHEBI:15377"/>
        <dbReference type="ChEBI" id="CHEBI:43474"/>
        <dbReference type="ChEBI" id="CHEBI:46858"/>
        <dbReference type="ChEBI" id="CHEBI:61978"/>
        <dbReference type="EC" id="3.1.3.48"/>
    </reaction>
</comment>
<comment type="similarity">
    <text evidence="4">Belongs to the protein-tyrosine phosphatase family.</text>
</comment>
<keyword id="KW-0378">Hydrolase</keyword>
<keyword id="KW-0904">Protein phosphatase</keyword>
<name>PTP16_STYPL</name>
<evidence type="ECO:0000250" key="1"/>
<evidence type="ECO:0000255" key="2">
    <source>
        <dbReference type="PROSITE-ProRule" id="PRU00160"/>
    </source>
</evidence>
<evidence type="ECO:0000255" key="3">
    <source>
        <dbReference type="PROSITE-ProRule" id="PRU10044"/>
    </source>
</evidence>
<evidence type="ECO:0000305" key="4"/>
<dbReference type="EC" id="3.1.3.48"/>
<dbReference type="EMBL" id="M38001">
    <property type="protein sequence ID" value="AAA29834.1"/>
    <property type="molecule type" value="mRNA"/>
</dbReference>
<dbReference type="SMR" id="P28208"/>
<dbReference type="GO" id="GO:0004725">
    <property type="term" value="F:protein tyrosine phosphatase activity"/>
    <property type="evidence" value="ECO:0007669"/>
    <property type="project" value="UniProtKB-EC"/>
</dbReference>
<dbReference type="CDD" id="cd00047">
    <property type="entry name" value="PTPc"/>
    <property type="match status" value="1"/>
</dbReference>
<dbReference type="Gene3D" id="3.90.190.10">
    <property type="entry name" value="Protein tyrosine phosphatase superfamily"/>
    <property type="match status" value="1"/>
</dbReference>
<dbReference type="InterPro" id="IPR029021">
    <property type="entry name" value="Prot-tyrosine_phosphatase-like"/>
</dbReference>
<dbReference type="InterPro" id="IPR050348">
    <property type="entry name" value="Protein-Tyr_Phosphatase"/>
</dbReference>
<dbReference type="InterPro" id="IPR000242">
    <property type="entry name" value="PTP_cat"/>
</dbReference>
<dbReference type="PANTHER" id="PTHR19134:SF562">
    <property type="entry name" value="PROTEIN-TYROSINE-PHOSPHATASE"/>
    <property type="match status" value="1"/>
</dbReference>
<dbReference type="PANTHER" id="PTHR19134">
    <property type="entry name" value="RECEPTOR-TYPE TYROSINE-PROTEIN PHOSPHATASE"/>
    <property type="match status" value="1"/>
</dbReference>
<dbReference type="Pfam" id="PF00102">
    <property type="entry name" value="Y_phosphatase"/>
    <property type="match status" value="1"/>
</dbReference>
<dbReference type="SUPFAM" id="SSF52799">
    <property type="entry name" value="(Phosphotyrosine protein) phosphatases II"/>
    <property type="match status" value="1"/>
</dbReference>
<dbReference type="PROSITE" id="PS50055">
    <property type="entry name" value="TYR_PHOSPHATASE_PTP"/>
    <property type="match status" value="1"/>
</dbReference>
<feature type="chain" id="PRO_0000094904" description="Tyrosine-protein phosphatase 16">
    <location>
        <begin position="1" status="less than"/>
        <end position="109" status="greater than"/>
    </location>
</feature>
<feature type="domain" description="Tyrosine-protein phosphatase" evidence="2">
    <location>
        <begin position="1" status="less than"/>
        <end position="109" status="greater than"/>
    </location>
</feature>
<feature type="binding site" evidence="1">
    <location>
        <position position="81"/>
    </location>
    <ligand>
        <name>substrate</name>
    </ligand>
</feature>
<feature type="non-terminal residue">
    <location>
        <position position="1"/>
    </location>
</feature>
<feature type="non-terminal residue">
    <location>
        <position position="109"/>
    </location>
</feature>
<reference key="1">
    <citation type="journal article" date="1991" name="Immunogenetics">
        <title>Protein tyrosine phosphatase domains from the protochordate Styela plicata.</title>
        <authorList>
            <person name="Matthews R.J."/>
            <person name="Flores E."/>
            <person name="Thomas M.L."/>
        </authorList>
    </citation>
    <scope>NUCLEOTIDE SEQUENCE [MRNA]</scope>
</reference>
<organism>
    <name type="scientific">Styela plicata</name>
    <name type="common">Wrinkled sea squirt</name>
    <name type="synonym">Ascidia plicata</name>
    <dbReference type="NCBI Taxonomy" id="7726"/>
    <lineage>
        <taxon>Eukaryota</taxon>
        <taxon>Metazoa</taxon>
        <taxon>Chordata</taxon>
        <taxon>Tunicata</taxon>
        <taxon>Ascidiacea</taxon>
        <taxon>Stolidobranchia</taxon>
        <taxon>Styelidae</taxon>
        <taxon>Styela</taxon>
    </lineage>
</organism>
<gene>
    <name type="primary">STY-16</name>
</gene>
<sequence>WRMVTEHTSTVIVMLTGLVEKGKKKCEKYWPDLGRRATYGQIALKTVDETHVGSYIKRMLEITSNGKMQFIHHFQFTSWPDYGVPVATSDLFRFHKAVTRIKTQKPIVV</sequence>
<protein>
    <recommendedName>
        <fullName>Tyrosine-protein phosphatase 16</fullName>
        <ecNumber>3.1.3.48</ecNumber>
    </recommendedName>
</protein>
<accession>P28208</accession>
<proteinExistence type="evidence at transcript level"/>